<geneLocation type="chloroplast"/>
<comment type="subunit">
    <text evidence="1">Part of the 30S ribosomal subunit.</text>
</comment>
<comment type="subcellular location">
    <subcellularLocation>
        <location>Plastid</location>
        <location>Chloroplast</location>
    </subcellularLocation>
</comment>
<comment type="similarity">
    <text evidence="2">Belongs to the universal ribosomal protein uS3 family.</text>
</comment>
<reference key="1">
    <citation type="journal article" date="2005" name="Mol. Biol. Evol.">
        <title>Analysis of Acorus calamus chloroplast genome and its phylogenetic implications.</title>
        <authorList>
            <person name="Goremykin V.V."/>
            <person name="Holland B."/>
            <person name="Hirsch-Ernst K.I."/>
            <person name="Hellwig F.H."/>
        </authorList>
    </citation>
    <scope>NUCLEOTIDE SEQUENCE [LARGE SCALE GENOMIC DNA]</scope>
</reference>
<dbReference type="EMBL" id="AJ879453">
    <property type="protein sequence ID" value="CAI53833.1"/>
    <property type="molecule type" value="Genomic_DNA"/>
</dbReference>
<dbReference type="RefSeq" id="YP_319802.1">
    <property type="nucleotide sequence ID" value="NC_007407.1"/>
</dbReference>
<dbReference type="SMR" id="Q3V4Z5"/>
<dbReference type="GeneID" id="3677460"/>
<dbReference type="GO" id="GO:0009507">
    <property type="term" value="C:chloroplast"/>
    <property type="evidence" value="ECO:0007669"/>
    <property type="project" value="UniProtKB-SubCell"/>
</dbReference>
<dbReference type="GO" id="GO:0022627">
    <property type="term" value="C:cytosolic small ribosomal subunit"/>
    <property type="evidence" value="ECO:0007669"/>
    <property type="project" value="TreeGrafter"/>
</dbReference>
<dbReference type="GO" id="GO:0019843">
    <property type="term" value="F:rRNA binding"/>
    <property type="evidence" value="ECO:0007669"/>
    <property type="project" value="UniProtKB-UniRule"/>
</dbReference>
<dbReference type="GO" id="GO:0003735">
    <property type="term" value="F:structural constituent of ribosome"/>
    <property type="evidence" value="ECO:0007669"/>
    <property type="project" value="InterPro"/>
</dbReference>
<dbReference type="GO" id="GO:0006412">
    <property type="term" value="P:translation"/>
    <property type="evidence" value="ECO:0007669"/>
    <property type="project" value="UniProtKB-UniRule"/>
</dbReference>
<dbReference type="CDD" id="cd02412">
    <property type="entry name" value="KH-II_30S_S3"/>
    <property type="match status" value="1"/>
</dbReference>
<dbReference type="FunFam" id="3.30.1140.32:FF:000003">
    <property type="entry name" value="30S ribosomal protein S3, chloroplastic"/>
    <property type="match status" value="1"/>
</dbReference>
<dbReference type="FunFam" id="3.30.300.20:FF:000008">
    <property type="entry name" value="30S ribosomal protein S3, chloroplastic"/>
    <property type="match status" value="1"/>
</dbReference>
<dbReference type="Gene3D" id="3.30.300.20">
    <property type="match status" value="1"/>
</dbReference>
<dbReference type="Gene3D" id="3.30.1140.32">
    <property type="entry name" value="Ribosomal protein S3, C-terminal domain"/>
    <property type="match status" value="1"/>
</dbReference>
<dbReference type="HAMAP" id="MF_01309_B">
    <property type="entry name" value="Ribosomal_uS3_B"/>
    <property type="match status" value="1"/>
</dbReference>
<dbReference type="InterPro" id="IPR015946">
    <property type="entry name" value="KH_dom-like_a/b"/>
</dbReference>
<dbReference type="InterPro" id="IPR004044">
    <property type="entry name" value="KH_dom_type_2"/>
</dbReference>
<dbReference type="InterPro" id="IPR009019">
    <property type="entry name" value="KH_sf_prok-type"/>
</dbReference>
<dbReference type="InterPro" id="IPR036419">
    <property type="entry name" value="Ribosomal_S3_C_sf"/>
</dbReference>
<dbReference type="InterPro" id="IPR005704">
    <property type="entry name" value="Ribosomal_uS3_bac-typ"/>
</dbReference>
<dbReference type="InterPro" id="IPR001351">
    <property type="entry name" value="Ribosomal_uS3_C"/>
</dbReference>
<dbReference type="InterPro" id="IPR018280">
    <property type="entry name" value="Ribosomal_uS3_CS"/>
</dbReference>
<dbReference type="NCBIfam" id="TIGR01009">
    <property type="entry name" value="rpsC_bact"/>
    <property type="match status" value="1"/>
</dbReference>
<dbReference type="PANTHER" id="PTHR11760">
    <property type="entry name" value="30S/40S RIBOSOMAL PROTEIN S3"/>
    <property type="match status" value="1"/>
</dbReference>
<dbReference type="PANTHER" id="PTHR11760:SF19">
    <property type="entry name" value="SMALL RIBOSOMAL SUBUNIT PROTEIN US3C"/>
    <property type="match status" value="1"/>
</dbReference>
<dbReference type="Pfam" id="PF00189">
    <property type="entry name" value="Ribosomal_S3_C"/>
    <property type="match status" value="1"/>
</dbReference>
<dbReference type="SUPFAM" id="SSF54814">
    <property type="entry name" value="Prokaryotic type KH domain (KH-domain type II)"/>
    <property type="match status" value="1"/>
</dbReference>
<dbReference type="SUPFAM" id="SSF54821">
    <property type="entry name" value="Ribosomal protein S3 C-terminal domain"/>
    <property type="match status" value="1"/>
</dbReference>
<dbReference type="PROSITE" id="PS50823">
    <property type="entry name" value="KH_TYPE_2"/>
    <property type="match status" value="1"/>
</dbReference>
<dbReference type="PROSITE" id="PS00548">
    <property type="entry name" value="RIBOSOMAL_S3"/>
    <property type="match status" value="1"/>
</dbReference>
<gene>
    <name type="primary">rps3</name>
</gene>
<sequence>MGQKINPLGFRLGATQSHLSLWFAQPKSYSMGLQEDEKIRECIKNYVQKNPRLSSGFEGIARIEIKKRIDLIQVIIYIGFPNLFIEGRTQGIKELQMSVQKRLNSVNQRLNIAIARISKPYGQPNILAEYIALQLKNRVSFRKAMKKAIELTEQADTKGIQIQIAGRIDGKEIARVEWIREGRVPLQTIRAKIDHCFHKVQTIYGVLGIKIWIFVDEE</sequence>
<organism>
    <name type="scientific">Acorus calamus</name>
    <name type="common">Sweet flag</name>
    <dbReference type="NCBI Taxonomy" id="4465"/>
    <lineage>
        <taxon>Eukaryota</taxon>
        <taxon>Viridiplantae</taxon>
        <taxon>Streptophyta</taxon>
        <taxon>Embryophyta</taxon>
        <taxon>Tracheophyta</taxon>
        <taxon>Spermatophyta</taxon>
        <taxon>Magnoliopsida</taxon>
        <taxon>Liliopsida</taxon>
        <taxon>Acoraceae</taxon>
        <taxon>Acorus</taxon>
    </lineage>
</organism>
<accession>Q3V4Z5</accession>
<keyword id="KW-0150">Chloroplast</keyword>
<keyword id="KW-0934">Plastid</keyword>
<keyword id="KW-0687">Ribonucleoprotein</keyword>
<keyword id="KW-0689">Ribosomal protein</keyword>
<keyword id="KW-0694">RNA-binding</keyword>
<keyword id="KW-0699">rRNA-binding</keyword>
<name>RR3_ACOCL</name>
<protein>
    <recommendedName>
        <fullName evidence="2">Small ribosomal subunit protein uS3c</fullName>
    </recommendedName>
    <alternativeName>
        <fullName>30S ribosomal protein S3, chloroplastic</fullName>
    </alternativeName>
</protein>
<proteinExistence type="inferred from homology"/>
<feature type="chain" id="PRO_0000230747" description="Small ribosomal subunit protein uS3c">
    <location>
        <begin position="1"/>
        <end position="218"/>
    </location>
</feature>
<feature type="domain" description="KH type-2">
    <location>
        <begin position="43"/>
        <end position="118"/>
    </location>
</feature>
<evidence type="ECO:0000250" key="1"/>
<evidence type="ECO:0000305" key="2"/>